<reference key="1">
    <citation type="journal article" date="2001" name="Nature">
        <title>Genome sequence and gene compaction of the eukaryote parasite Encephalitozoon cuniculi.</title>
        <authorList>
            <person name="Katinka M.D."/>
            <person name="Duprat S."/>
            <person name="Cornillot E."/>
            <person name="Metenier G."/>
            <person name="Thomarat F."/>
            <person name="Prensier G."/>
            <person name="Barbe V."/>
            <person name="Peyretaillade E."/>
            <person name="Brottier P."/>
            <person name="Wincker P."/>
            <person name="Delbac F."/>
            <person name="El Alaoui H."/>
            <person name="Peyret P."/>
            <person name="Saurin W."/>
            <person name="Gouy M."/>
            <person name="Weissenbach J."/>
            <person name="Vivares C.P."/>
        </authorList>
    </citation>
    <scope>NUCLEOTIDE SEQUENCE [LARGE SCALE GENOMIC DNA]</scope>
    <source>
        <strain>GB-M1</strain>
    </source>
</reference>
<reference key="2">
    <citation type="journal article" date="2006" name="Proteomics">
        <title>Proteomic analysis of the eukaryotic parasite Encephalitozoon cuniculi (microsporidia): a reference map for proteins expressed in late sporogonial stages.</title>
        <authorList>
            <person name="Brosson D."/>
            <person name="Kuhn L."/>
            <person name="Delbac F."/>
            <person name="Garin J."/>
            <person name="Vivares C.P."/>
            <person name="Texier C."/>
        </authorList>
    </citation>
    <scope>IDENTIFICATION BY MASS SPECTROMETRY [LARGE SCALE ANALYSIS]</scope>
    <scope>DEVELOPMENTAL STAGE</scope>
</reference>
<organism>
    <name type="scientific">Encephalitozoon cuniculi (strain GB-M1)</name>
    <name type="common">Microsporidian parasite</name>
    <dbReference type="NCBI Taxonomy" id="284813"/>
    <lineage>
        <taxon>Eukaryota</taxon>
        <taxon>Fungi</taxon>
        <taxon>Fungi incertae sedis</taxon>
        <taxon>Microsporidia</taxon>
        <taxon>Unikaryonidae</taxon>
        <taxon>Encephalitozoon</taxon>
    </lineage>
</organism>
<keyword id="KW-0963">Cytoplasm</keyword>
<keyword id="KW-0378">Hydrolase</keyword>
<keyword id="KW-0479">Metal-binding</keyword>
<keyword id="KW-0482">Metalloprotease</keyword>
<keyword id="KW-0539">Nucleus</keyword>
<keyword id="KW-0645">Protease</keyword>
<keyword id="KW-0647">Proteasome</keyword>
<keyword id="KW-1185">Reference proteome</keyword>
<keyword id="KW-0862">Zinc</keyword>
<accession>Q8SQY3</accession>
<protein>
    <recommendedName>
        <fullName>26S proteasome regulatory subunit RPN11</fullName>
    </recommendedName>
</protein>
<proteinExistence type="evidence at protein level"/>
<name>RPN11_ENCCU</name>
<feature type="chain" id="PRO_0000382902" description="26S proteasome regulatory subunit RPN11">
    <location>
        <begin position="1"/>
        <end position="294"/>
    </location>
</feature>
<feature type="domain" description="MPN" evidence="2">
    <location>
        <begin position="21"/>
        <end position="156"/>
    </location>
</feature>
<feature type="short sequence motif" description="JAMM motif" evidence="2">
    <location>
        <begin position="103"/>
        <end position="116"/>
    </location>
</feature>
<feature type="binding site" evidence="2">
    <location>
        <position position="103"/>
    </location>
    <ligand>
        <name>Zn(2+)</name>
        <dbReference type="ChEBI" id="CHEBI:29105"/>
        <note>catalytic</note>
    </ligand>
</feature>
<feature type="binding site" evidence="2">
    <location>
        <position position="105"/>
    </location>
    <ligand>
        <name>Zn(2+)</name>
        <dbReference type="ChEBI" id="CHEBI:29105"/>
        <note>catalytic</note>
    </ligand>
</feature>
<feature type="binding site" evidence="2">
    <location>
        <position position="116"/>
    </location>
    <ligand>
        <name>Zn(2+)</name>
        <dbReference type="ChEBI" id="CHEBI:29105"/>
        <note>catalytic</note>
    </ligand>
</feature>
<evidence type="ECO:0000250" key="1"/>
<evidence type="ECO:0000255" key="2">
    <source>
        <dbReference type="PROSITE-ProRule" id="PRU01182"/>
    </source>
</evidence>
<evidence type="ECO:0000269" key="3">
    <source>
    </source>
</evidence>
<evidence type="ECO:0000305" key="4"/>
<sequence>MFSGFVGPDDGEPTSDASETVQISSLALLKMLKHGRAGIPLEVMGLMLGEFVDEYTVKVVDVFAMPQSGTNVTVESVDPIFQMEMMSILKATGRHETVVGWYHSHPGFGCWLSTVDISTQQSFEKLCKRAVAVVVDPIQSVKGKVVIDAFRLIDNQLGVLGGEPRQVTSNIGYLKTPTLISIIHGLNKHYYSFNITCRKNDFEQKMLLNLHRKTWADNLKLGDVRSKREEALKLIESYGKAFEEEKNLAGKNPDMAKVGRIDYRRRLLEKCEESIMENTIYSLLYSIHRYIFTQ</sequence>
<gene>
    <name type="primary">RPN11</name>
    <name type="ordered locus">ECU11_0570</name>
</gene>
<dbReference type="EMBL" id="AL590450">
    <property type="protein sequence ID" value="CAD25967.1"/>
    <property type="molecule type" value="Genomic_DNA"/>
</dbReference>
<dbReference type="RefSeq" id="NP_586363.1">
    <property type="nucleotide sequence ID" value="NM_001042196.1"/>
</dbReference>
<dbReference type="SMR" id="Q8SQY3"/>
<dbReference type="FunCoup" id="Q8SQY3">
    <property type="interactions" value="296"/>
</dbReference>
<dbReference type="STRING" id="284813.Q8SQY3"/>
<dbReference type="MEROPS" id="M67.A11"/>
<dbReference type="GeneID" id="860016"/>
<dbReference type="KEGG" id="ecu:ECU11_0570"/>
<dbReference type="VEuPathDB" id="MicrosporidiaDB:ECU11_0570"/>
<dbReference type="HOGENOM" id="CLU_052991_0_1_1"/>
<dbReference type="InParanoid" id="Q8SQY3"/>
<dbReference type="OMA" id="PCEILAD"/>
<dbReference type="OrthoDB" id="605656at2759"/>
<dbReference type="Proteomes" id="UP000000819">
    <property type="component" value="Chromosome XI"/>
</dbReference>
<dbReference type="GO" id="GO:0005737">
    <property type="term" value="C:cytoplasm"/>
    <property type="evidence" value="ECO:0007669"/>
    <property type="project" value="UniProtKB-SubCell"/>
</dbReference>
<dbReference type="GO" id="GO:0005634">
    <property type="term" value="C:nucleus"/>
    <property type="evidence" value="ECO:0007669"/>
    <property type="project" value="UniProtKB-SubCell"/>
</dbReference>
<dbReference type="GO" id="GO:0000502">
    <property type="term" value="C:proteasome complex"/>
    <property type="evidence" value="ECO:0007669"/>
    <property type="project" value="UniProtKB-KW"/>
</dbReference>
<dbReference type="GO" id="GO:0046872">
    <property type="term" value="F:metal ion binding"/>
    <property type="evidence" value="ECO:0007669"/>
    <property type="project" value="UniProtKB-KW"/>
</dbReference>
<dbReference type="GO" id="GO:0008237">
    <property type="term" value="F:metallopeptidase activity"/>
    <property type="evidence" value="ECO:0007669"/>
    <property type="project" value="UniProtKB-KW"/>
</dbReference>
<dbReference type="GO" id="GO:0006508">
    <property type="term" value="P:proteolysis"/>
    <property type="evidence" value="ECO:0007669"/>
    <property type="project" value="UniProtKB-KW"/>
</dbReference>
<dbReference type="CDD" id="cd08069">
    <property type="entry name" value="MPN_RPN11_CSN5"/>
    <property type="match status" value="1"/>
</dbReference>
<dbReference type="FunFam" id="3.40.140.10:FF:000026">
    <property type="entry name" value="26S proteasome non-ATPase regulatory subunit 14"/>
    <property type="match status" value="1"/>
</dbReference>
<dbReference type="Gene3D" id="3.40.140.10">
    <property type="entry name" value="Cytidine Deaminase, domain 2"/>
    <property type="match status" value="1"/>
</dbReference>
<dbReference type="InterPro" id="IPR000555">
    <property type="entry name" value="JAMM/MPN+_dom"/>
</dbReference>
<dbReference type="InterPro" id="IPR050242">
    <property type="entry name" value="JAMM_MPN+_peptidase_M67A"/>
</dbReference>
<dbReference type="InterPro" id="IPR037518">
    <property type="entry name" value="MPN"/>
</dbReference>
<dbReference type="PANTHER" id="PTHR10410">
    <property type="entry name" value="EUKARYOTIC TRANSLATION INITIATION FACTOR 3 -RELATED"/>
    <property type="match status" value="1"/>
</dbReference>
<dbReference type="Pfam" id="PF01398">
    <property type="entry name" value="JAB"/>
    <property type="match status" value="1"/>
</dbReference>
<dbReference type="SMART" id="SM00232">
    <property type="entry name" value="JAB_MPN"/>
    <property type="match status" value="1"/>
</dbReference>
<dbReference type="SUPFAM" id="SSF102712">
    <property type="entry name" value="JAB1/MPN domain"/>
    <property type="match status" value="1"/>
</dbReference>
<dbReference type="PROSITE" id="PS50249">
    <property type="entry name" value="MPN"/>
    <property type="match status" value="1"/>
</dbReference>
<comment type="function">
    <text evidence="1">Acts as a regulatory subunit of the 26S proteasome which degrades poly-ubiquitinated proteins in the cytoplasm and in the nucleus. It is essential for the regulated turnover of proteins and for the removal of misfolded proteins. The proteasome is a multicatalytic proteinase complex that is characterized by its ability to cleave peptides with Arg, Phe, Tyr, Leu, and Glu adjacent to the leaving group at neutral or slightly basic pH (By similarity).</text>
</comment>
<comment type="subunit">
    <text evidence="1">The 26S proteasome consists of a 20S proteasome core and two 19S regulatory subunits. The 20S proteasome core is composed of 28 subunits that are arranged in four stacked rings, resulting in a barrel-shaped structure. The two end rings are each formed by seven alpha subunits, and the two central rings are each formed by seven beta subunits. The catalytic chamber with the active sites is on the inside of the barrel (By similarity).</text>
</comment>
<comment type="subcellular location">
    <subcellularLocation>
        <location evidence="1">Cytoplasm</location>
    </subcellularLocation>
    <subcellularLocation>
        <location evidence="1">Nucleus</location>
    </subcellularLocation>
</comment>
<comment type="developmental stage">
    <text evidence="3">Expressed in late sporogonial stages.</text>
</comment>
<comment type="similarity">
    <text evidence="4">Belongs to the peptidase M67A family.</text>
</comment>